<sequence length="335" mass="34536">MQRPLTEAEAADAMRVIMRGEATAAQIAAFALAVTVRGASADNLAGMARAAQEFATPVPRAGGDLLDTCGTGGDGLNTFNISTAAAIVAAACGVRVAKHGNRSASSACGSADVLEELGVRIDLGAEEAAACLDRTGITFLFAPVFHPAFRHTAGPRRELGARTVFNLLGPLCNPSGARLRTLGVPSRELVEPMTEVLERLGVTRALVFHSADGMDELSTAAPAHLVELRDGRRTTHRFDPAEHGLARSRPGDLAGGDRAVNAAVLRRVLAGGRGPARDVVLLNAAAALRVAGVAGTWSDGLRLAASAVDGGAAAGLLDRWAHASWQRADLVEVPA</sequence>
<keyword id="KW-0028">Amino-acid biosynthesis</keyword>
<keyword id="KW-0057">Aromatic amino acid biosynthesis</keyword>
<keyword id="KW-0328">Glycosyltransferase</keyword>
<keyword id="KW-0460">Magnesium</keyword>
<keyword id="KW-0479">Metal-binding</keyword>
<keyword id="KW-1185">Reference proteome</keyword>
<keyword id="KW-0808">Transferase</keyword>
<keyword id="KW-0822">Tryptophan biosynthesis</keyword>
<reference key="1">
    <citation type="journal article" date="2002" name="Nature">
        <title>Complete genome sequence of the model actinomycete Streptomyces coelicolor A3(2).</title>
        <authorList>
            <person name="Bentley S.D."/>
            <person name="Chater K.F."/>
            <person name="Cerdeno-Tarraga A.-M."/>
            <person name="Challis G.L."/>
            <person name="Thomson N.R."/>
            <person name="James K.D."/>
            <person name="Harris D.E."/>
            <person name="Quail M.A."/>
            <person name="Kieser H."/>
            <person name="Harper D."/>
            <person name="Bateman A."/>
            <person name="Brown S."/>
            <person name="Chandra G."/>
            <person name="Chen C.W."/>
            <person name="Collins M."/>
            <person name="Cronin A."/>
            <person name="Fraser A."/>
            <person name="Goble A."/>
            <person name="Hidalgo J."/>
            <person name="Hornsby T."/>
            <person name="Howarth S."/>
            <person name="Huang C.-H."/>
            <person name="Kieser T."/>
            <person name="Larke L."/>
            <person name="Murphy L.D."/>
            <person name="Oliver K."/>
            <person name="O'Neil S."/>
            <person name="Rabbinowitsch E."/>
            <person name="Rajandream M.A."/>
            <person name="Rutherford K.M."/>
            <person name="Rutter S."/>
            <person name="Seeger K."/>
            <person name="Saunders D."/>
            <person name="Sharp S."/>
            <person name="Squares R."/>
            <person name="Squares S."/>
            <person name="Taylor K."/>
            <person name="Warren T."/>
            <person name="Wietzorrek A."/>
            <person name="Woodward J.R."/>
            <person name="Barrell B.G."/>
            <person name="Parkhill J."/>
            <person name="Hopwood D.A."/>
        </authorList>
    </citation>
    <scope>NUCLEOTIDE SEQUENCE [LARGE SCALE GENOMIC DNA]</scope>
    <source>
        <strain>ATCC BAA-471 / A3(2) / M145</strain>
    </source>
</reference>
<comment type="function">
    <text evidence="1">Catalyzes the transfer of the phosphoribosyl group of 5-phosphorylribose-1-pyrophosphate (PRPP) to anthranilate to yield N-(5'-phosphoribosyl)-anthranilate (PRA).</text>
</comment>
<comment type="catalytic activity">
    <reaction evidence="1">
        <text>N-(5-phospho-beta-D-ribosyl)anthranilate + diphosphate = 5-phospho-alpha-D-ribose 1-diphosphate + anthranilate</text>
        <dbReference type="Rhea" id="RHEA:11768"/>
        <dbReference type="ChEBI" id="CHEBI:16567"/>
        <dbReference type="ChEBI" id="CHEBI:18277"/>
        <dbReference type="ChEBI" id="CHEBI:33019"/>
        <dbReference type="ChEBI" id="CHEBI:58017"/>
        <dbReference type="EC" id="2.4.2.18"/>
    </reaction>
</comment>
<comment type="cofactor">
    <cofactor evidence="1">
        <name>Mg(2+)</name>
        <dbReference type="ChEBI" id="CHEBI:18420"/>
    </cofactor>
    <text evidence="1">Binds 2 magnesium ions per monomer.</text>
</comment>
<comment type="pathway">
    <text evidence="1">Amino-acid biosynthesis; L-tryptophan biosynthesis; L-tryptophan from chorismate: step 2/5.</text>
</comment>
<comment type="subunit">
    <text evidence="1">Homodimer.</text>
</comment>
<comment type="similarity">
    <text evidence="1">Belongs to the anthranilate phosphoribosyltransferase family.</text>
</comment>
<evidence type="ECO:0000255" key="1">
    <source>
        <dbReference type="HAMAP-Rule" id="MF_00211"/>
    </source>
</evidence>
<name>TRPD2_STRCO</name>
<protein>
    <recommendedName>
        <fullName evidence="1">Anthranilate phosphoribosyltransferase 2</fullName>
        <ecNumber evidence="1">2.4.2.18</ecNumber>
    </recommendedName>
</protein>
<feature type="chain" id="PRO_0000154490" description="Anthranilate phosphoribosyltransferase 2">
    <location>
        <begin position="1"/>
        <end position="335"/>
    </location>
</feature>
<feature type="binding site" evidence="1">
    <location>
        <position position="70"/>
    </location>
    <ligand>
        <name>5-phospho-alpha-D-ribose 1-diphosphate</name>
        <dbReference type="ChEBI" id="CHEBI:58017"/>
    </ligand>
</feature>
<feature type="binding site" evidence="1">
    <location>
        <position position="70"/>
    </location>
    <ligand>
        <name>anthranilate</name>
        <dbReference type="ChEBI" id="CHEBI:16567"/>
        <label>1</label>
    </ligand>
</feature>
<feature type="binding site" evidence="1">
    <location>
        <begin position="73"/>
        <end position="74"/>
    </location>
    <ligand>
        <name>5-phospho-alpha-D-ribose 1-diphosphate</name>
        <dbReference type="ChEBI" id="CHEBI:58017"/>
    </ligand>
</feature>
<feature type="binding site" evidence="1">
    <location>
        <position position="78"/>
    </location>
    <ligand>
        <name>5-phospho-alpha-D-ribose 1-diphosphate</name>
        <dbReference type="ChEBI" id="CHEBI:58017"/>
    </ligand>
</feature>
<feature type="binding site" evidence="1">
    <location>
        <begin position="80"/>
        <end position="83"/>
    </location>
    <ligand>
        <name>5-phospho-alpha-D-ribose 1-diphosphate</name>
        <dbReference type="ChEBI" id="CHEBI:58017"/>
    </ligand>
</feature>
<feature type="binding site" evidence="1">
    <location>
        <position position="82"/>
    </location>
    <ligand>
        <name>Mg(2+)</name>
        <dbReference type="ChEBI" id="CHEBI:18420"/>
        <label>1</label>
    </ligand>
</feature>
<feature type="binding site" evidence="1">
    <location>
        <begin position="98"/>
        <end position="106"/>
    </location>
    <ligand>
        <name>5-phospho-alpha-D-ribose 1-diphosphate</name>
        <dbReference type="ChEBI" id="CHEBI:58017"/>
    </ligand>
</feature>
<feature type="binding site" evidence="1">
    <location>
        <position position="101"/>
    </location>
    <ligand>
        <name>anthranilate</name>
        <dbReference type="ChEBI" id="CHEBI:16567"/>
        <label>1</label>
    </ligand>
</feature>
<feature type="binding site" evidence="1">
    <location>
        <position position="110"/>
    </location>
    <ligand>
        <name>5-phospho-alpha-D-ribose 1-diphosphate</name>
        <dbReference type="ChEBI" id="CHEBI:58017"/>
    </ligand>
</feature>
<feature type="binding site" evidence="1">
    <location>
        <position position="156"/>
    </location>
    <ligand>
        <name>anthranilate</name>
        <dbReference type="ChEBI" id="CHEBI:16567"/>
        <label>2</label>
    </ligand>
</feature>
<feature type="binding site" evidence="1">
    <location>
        <position position="215"/>
    </location>
    <ligand>
        <name>Mg(2+)</name>
        <dbReference type="ChEBI" id="CHEBI:18420"/>
        <label>2</label>
    </ligand>
</feature>
<feature type="binding site" evidence="1">
    <location>
        <position position="216"/>
    </location>
    <ligand>
        <name>Mg(2+)</name>
        <dbReference type="ChEBI" id="CHEBI:18420"/>
        <label>1</label>
    </ligand>
</feature>
<feature type="binding site" evidence="1">
    <location>
        <position position="216"/>
    </location>
    <ligand>
        <name>Mg(2+)</name>
        <dbReference type="ChEBI" id="CHEBI:18420"/>
        <label>2</label>
    </ligand>
</feature>
<gene>
    <name evidence="1" type="primary">trpD2</name>
    <name type="ordered locus">SCO3212</name>
    <name type="ORF">SCE8.05c</name>
</gene>
<accession>Q9Z4W9</accession>
<organism>
    <name type="scientific">Streptomyces coelicolor (strain ATCC BAA-471 / A3(2) / M145)</name>
    <dbReference type="NCBI Taxonomy" id="100226"/>
    <lineage>
        <taxon>Bacteria</taxon>
        <taxon>Bacillati</taxon>
        <taxon>Actinomycetota</taxon>
        <taxon>Actinomycetes</taxon>
        <taxon>Kitasatosporales</taxon>
        <taxon>Streptomycetaceae</taxon>
        <taxon>Streptomyces</taxon>
        <taxon>Streptomyces albidoflavus group</taxon>
    </lineage>
</organism>
<proteinExistence type="inferred from homology"/>
<dbReference type="EC" id="2.4.2.18" evidence="1"/>
<dbReference type="EMBL" id="AL939115">
    <property type="protein sequence ID" value="CAB38583.1"/>
    <property type="molecule type" value="Genomic_DNA"/>
</dbReference>
<dbReference type="PIR" id="T36304">
    <property type="entry name" value="T36304"/>
</dbReference>
<dbReference type="RefSeq" id="NP_627426.1">
    <property type="nucleotide sequence ID" value="NC_003888.3"/>
</dbReference>
<dbReference type="SMR" id="Q9Z4W9"/>
<dbReference type="STRING" id="100226.gene:17760830"/>
<dbReference type="PaxDb" id="100226-SCO3212"/>
<dbReference type="KEGG" id="sco:SCO3212"/>
<dbReference type="PATRIC" id="fig|100226.15.peg.3272"/>
<dbReference type="eggNOG" id="COG0547">
    <property type="taxonomic scope" value="Bacteria"/>
</dbReference>
<dbReference type="HOGENOM" id="CLU_034315_2_1_11"/>
<dbReference type="InParanoid" id="Q9Z4W9"/>
<dbReference type="OrthoDB" id="9806430at2"/>
<dbReference type="PhylomeDB" id="Q9Z4W9"/>
<dbReference type="UniPathway" id="UPA00035">
    <property type="reaction ID" value="UER00041"/>
</dbReference>
<dbReference type="Proteomes" id="UP000001973">
    <property type="component" value="Chromosome"/>
</dbReference>
<dbReference type="GO" id="GO:0005829">
    <property type="term" value="C:cytosol"/>
    <property type="evidence" value="ECO:0000318"/>
    <property type="project" value="GO_Central"/>
</dbReference>
<dbReference type="GO" id="GO:0004048">
    <property type="term" value="F:anthranilate phosphoribosyltransferase activity"/>
    <property type="evidence" value="ECO:0007669"/>
    <property type="project" value="UniProtKB-UniRule"/>
</dbReference>
<dbReference type="GO" id="GO:0000287">
    <property type="term" value="F:magnesium ion binding"/>
    <property type="evidence" value="ECO:0007669"/>
    <property type="project" value="UniProtKB-UniRule"/>
</dbReference>
<dbReference type="GO" id="GO:0000162">
    <property type="term" value="P:L-tryptophan biosynthetic process"/>
    <property type="evidence" value="ECO:0000318"/>
    <property type="project" value="GO_Central"/>
</dbReference>
<dbReference type="FunFam" id="3.40.1030.10:FF:000002">
    <property type="entry name" value="Anthranilate phosphoribosyltransferase"/>
    <property type="match status" value="1"/>
</dbReference>
<dbReference type="Gene3D" id="3.40.1030.10">
    <property type="entry name" value="Nucleoside phosphorylase/phosphoribosyltransferase catalytic domain"/>
    <property type="match status" value="1"/>
</dbReference>
<dbReference type="Gene3D" id="1.20.970.10">
    <property type="entry name" value="Transferase, Pyrimidine Nucleoside Phosphorylase, Chain C"/>
    <property type="match status" value="1"/>
</dbReference>
<dbReference type="HAMAP" id="MF_00211">
    <property type="entry name" value="TrpD"/>
    <property type="match status" value="1"/>
</dbReference>
<dbReference type="InterPro" id="IPR005940">
    <property type="entry name" value="Anthranilate_Pribosyl_Tfrase"/>
</dbReference>
<dbReference type="InterPro" id="IPR000312">
    <property type="entry name" value="Glycosyl_Trfase_fam3"/>
</dbReference>
<dbReference type="InterPro" id="IPR017459">
    <property type="entry name" value="Glycosyl_Trfase_fam3_N_dom"/>
</dbReference>
<dbReference type="InterPro" id="IPR036320">
    <property type="entry name" value="Glycosyl_Trfase_fam3_N_dom_sf"/>
</dbReference>
<dbReference type="InterPro" id="IPR035902">
    <property type="entry name" value="Nuc_phospho_transferase"/>
</dbReference>
<dbReference type="NCBIfam" id="TIGR01245">
    <property type="entry name" value="trpD"/>
    <property type="match status" value="1"/>
</dbReference>
<dbReference type="PANTHER" id="PTHR43285">
    <property type="entry name" value="ANTHRANILATE PHOSPHORIBOSYLTRANSFERASE"/>
    <property type="match status" value="1"/>
</dbReference>
<dbReference type="PANTHER" id="PTHR43285:SF2">
    <property type="entry name" value="ANTHRANILATE PHOSPHORIBOSYLTRANSFERASE"/>
    <property type="match status" value="1"/>
</dbReference>
<dbReference type="Pfam" id="PF02885">
    <property type="entry name" value="Glycos_trans_3N"/>
    <property type="match status" value="1"/>
</dbReference>
<dbReference type="Pfam" id="PF00591">
    <property type="entry name" value="Glycos_transf_3"/>
    <property type="match status" value="1"/>
</dbReference>
<dbReference type="SUPFAM" id="SSF52418">
    <property type="entry name" value="Nucleoside phosphorylase/phosphoribosyltransferase catalytic domain"/>
    <property type="match status" value="1"/>
</dbReference>
<dbReference type="SUPFAM" id="SSF47648">
    <property type="entry name" value="Nucleoside phosphorylase/phosphoribosyltransferase N-terminal domain"/>
    <property type="match status" value="1"/>
</dbReference>